<gene>
    <name type="primary">MT-CYB</name>
    <name type="synonym">COB</name>
    <name type="synonym">CYTB</name>
    <name type="synonym">MTCYB</name>
</gene>
<accession>O79462</accession>
<accession>O21423</accession>
<comment type="function">
    <text evidence="2">Component of the ubiquinol-cytochrome c reductase complex (complex III or cytochrome b-c1 complex) that is part of the mitochondrial respiratory chain. The b-c1 complex mediates electron transfer from ubiquinol to cytochrome c. Contributes to the generation of a proton gradient across the mitochondrial membrane that is then used for ATP synthesis.</text>
</comment>
<comment type="cofactor">
    <cofactor evidence="2">
        <name>heme b</name>
        <dbReference type="ChEBI" id="CHEBI:60344"/>
    </cofactor>
    <text evidence="2">Binds 2 heme b groups non-covalently.</text>
</comment>
<comment type="subunit">
    <text evidence="2">The cytochrome bc1 complex contains 11 subunits: 3 respiratory subunits (MT-CYB, CYC1 and UQCRFS1), 2 core proteins (UQCRC1 and UQCRC2) and 6 low-molecular weight proteins (UQCRH/QCR6, UQCRB/QCR7, UQCRQ/QCR8, UQCR10/QCR9, UQCR11/QCR10 and a cleavage product of UQCRFS1). This cytochrome bc1 complex then forms a dimer.</text>
</comment>
<comment type="subcellular location">
    <subcellularLocation>
        <location evidence="2">Mitochondrion inner membrane</location>
        <topology evidence="2">Multi-pass membrane protein</topology>
    </subcellularLocation>
</comment>
<comment type="miscellaneous">
    <text evidence="1">Heme 1 (or BL or b562) is low-potential and absorbs at about 562 nm, and heme 2 (or BH or b566) is high-potential and absorbs at about 566 nm.</text>
</comment>
<comment type="similarity">
    <text evidence="3 4">Belongs to the cytochrome b family.</text>
</comment>
<comment type="caution">
    <text evidence="2">The full-length protein contains only eight transmembrane helices, not nine as predicted by bioinformatics tools.</text>
</comment>
<keyword id="KW-0249">Electron transport</keyword>
<keyword id="KW-0349">Heme</keyword>
<keyword id="KW-0408">Iron</keyword>
<keyword id="KW-0472">Membrane</keyword>
<keyword id="KW-0479">Metal-binding</keyword>
<keyword id="KW-0496">Mitochondrion</keyword>
<keyword id="KW-0999">Mitochondrion inner membrane</keyword>
<keyword id="KW-0679">Respiratory chain</keyword>
<keyword id="KW-0812">Transmembrane</keyword>
<keyword id="KW-1133">Transmembrane helix</keyword>
<keyword id="KW-0813">Transport</keyword>
<keyword id="KW-0830">Ubiquinone</keyword>
<reference key="1">
    <citation type="journal article" date="1997" name="Zool. Sci.">
        <title>Molecular phylogeny from nucleotide sequences of the mitochondrial cytochrome b gene and evolutionary history of Eurasian soricine shrews (Mammalia, Insectivora).</title>
        <authorList>
            <person name="Ohdachi S."/>
            <person name="Masuda R."/>
            <person name="Abe H."/>
            <person name="Adachi J."/>
            <person name="Dokuchaev N.E."/>
            <person name="Haukisalmi V."/>
            <person name="Yoshida M.C."/>
        </authorList>
    </citation>
    <scope>NUCLEOTIDE SEQUENCE [GENOMIC DNA] OF 1-134</scope>
    <source>
        <strain>Isolate #74</strain>
        <tissue>Hindfoot</tissue>
    </source>
</reference>
<reference key="2">
    <citation type="journal article" date="1999" name="Mol. Phylogenet. Evol.">
        <title>Molecular phylogeny and evolution of Sorex shrews (Soricidae: Insectivora) inferred from mitochondrial DNA sequence data.</title>
        <authorList>
            <person name="Fumagalli L."/>
            <person name="Taberlet P."/>
            <person name="Stewart D.T."/>
            <person name="Gielly L."/>
            <person name="Hausser J."/>
            <person name="Vogel P."/>
        </authorList>
    </citation>
    <scope>NUCLEOTIDE SEQUENCE [GENOMIC DNA] OF 44-379</scope>
</reference>
<organism>
    <name type="scientific">Sorex raddei</name>
    <name type="common">Radde's shrew</name>
    <dbReference type="NCBI Taxonomy" id="62284"/>
    <lineage>
        <taxon>Eukaryota</taxon>
        <taxon>Metazoa</taxon>
        <taxon>Chordata</taxon>
        <taxon>Craniata</taxon>
        <taxon>Vertebrata</taxon>
        <taxon>Euteleostomi</taxon>
        <taxon>Mammalia</taxon>
        <taxon>Eutheria</taxon>
        <taxon>Laurasiatheria</taxon>
        <taxon>Eulipotyphla</taxon>
        <taxon>Soricidae</taxon>
        <taxon>Soricinae</taxon>
        <taxon>Sorex</taxon>
    </lineage>
</organism>
<name>CYB_SORRA</name>
<sequence>MTNLRKTHPLMKIVNSSFIDLPAPSNISSWWNFGSLLGICLIIQILTGLFLAMHYTSDTXTAFSSVTHICRDVNYGWLIRYLHANGASMFFICLFLHVGRGLYYGSYMYLETWNIGVLLLFAVMATAFMGYVLPWGQMSFWGATVITNLLSAIPYIGSDLVEWIWGGFSVDKATLTRFFAFHFILPFIIAALAGVHLLFLHETGSNNPSGLPSDADKIPFHPYYTIKDILGVLLLILALTSLVLFSPDLLGDPDNYTPANPLNTPPHIKPEWYFLFAYAILRSIPNKLGGVLALALSILILAVVPFLHTSKQRSMMFRPFSQCLFWILVADLLTLTWIGGQPVEHPFIIIGQLASILYFLLILVIMPITSLFENNLLKW</sequence>
<proteinExistence type="inferred from homology"/>
<evidence type="ECO:0000250" key="1"/>
<evidence type="ECO:0000250" key="2">
    <source>
        <dbReference type="UniProtKB" id="P00157"/>
    </source>
</evidence>
<evidence type="ECO:0000255" key="3">
    <source>
        <dbReference type="PROSITE-ProRule" id="PRU00967"/>
    </source>
</evidence>
<evidence type="ECO:0000255" key="4">
    <source>
        <dbReference type="PROSITE-ProRule" id="PRU00968"/>
    </source>
</evidence>
<geneLocation type="mitochondrion"/>
<dbReference type="EMBL" id="D85365">
    <property type="protein sequence ID" value="BAA21358.1"/>
    <property type="molecule type" value="Genomic_DNA"/>
</dbReference>
<dbReference type="EMBL" id="AJ000444">
    <property type="protein sequence ID" value="CAA04088.1"/>
    <property type="molecule type" value="Genomic_DNA"/>
</dbReference>
<dbReference type="GO" id="GO:0005743">
    <property type="term" value="C:mitochondrial inner membrane"/>
    <property type="evidence" value="ECO:0007669"/>
    <property type="project" value="UniProtKB-SubCell"/>
</dbReference>
<dbReference type="GO" id="GO:0045275">
    <property type="term" value="C:respiratory chain complex III"/>
    <property type="evidence" value="ECO:0007669"/>
    <property type="project" value="InterPro"/>
</dbReference>
<dbReference type="GO" id="GO:0046872">
    <property type="term" value="F:metal ion binding"/>
    <property type="evidence" value="ECO:0007669"/>
    <property type="project" value="UniProtKB-KW"/>
</dbReference>
<dbReference type="GO" id="GO:0008121">
    <property type="term" value="F:ubiquinol-cytochrome-c reductase activity"/>
    <property type="evidence" value="ECO:0007669"/>
    <property type="project" value="InterPro"/>
</dbReference>
<dbReference type="GO" id="GO:0006122">
    <property type="term" value="P:mitochondrial electron transport, ubiquinol to cytochrome c"/>
    <property type="evidence" value="ECO:0007669"/>
    <property type="project" value="TreeGrafter"/>
</dbReference>
<dbReference type="CDD" id="cd00290">
    <property type="entry name" value="cytochrome_b_C"/>
    <property type="match status" value="1"/>
</dbReference>
<dbReference type="CDD" id="cd00284">
    <property type="entry name" value="Cytochrome_b_N"/>
    <property type="match status" value="1"/>
</dbReference>
<dbReference type="FunFam" id="1.20.810.10:FF:000002">
    <property type="entry name" value="Cytochrome b"/>
    <property type="match status" value="1"/>
</dbReference>
<dbReference type="Gene3D" id="1.20.810.10">
    <property type="entry name" value="Cytochrome Bc1 Complex, Chain C"/>
    <property type="match status" value="1"/>
</dbReference>
<dbReference type="InterPro" id="IPR005798">
    <property type="entry name" value="Cyt_b/b6_C"/>
</dbReference>
<dbReference type="InterPro" id="IPR036150">
    <property type="entry name" value="Cyt_b/b6_C_sf"/>
</dbReference>
<dbReference type="InterPro" id="IPR005797">
    <property type="entry name" value="Cyt_b/b6_N"/>
</dbReference>
<dbReference type="InterPro" id="IPR027387">
    <property type="entry name" value="Cytb/b6-like_sf"/>
</dbReference>
<dbReference type="InterPro" id="IPR030689">
    <property type="entry name" value="Cytochrome_b"/>
</dbReference>
<dbReference type="InterPro" id="IPR048260">
    <property type="entry name" value="Cytochrome_b_C_euk/bac"/>
</dbReference>
<dbReference type="InterPro" id="IPR048259">
    <property type="entry name" value="Cytochrome_b_N_euk/bac"/>
</dbReference>
<dbReference type="InterPro" id="IPR016174">
    <property type="entry name" value="Di-haem_cyt_TM"/>
</dbReference>
<dbReference type="PANTHER" id="PTHR19271">
    <property type="entry name" value="CYTOCHROME B"/>
    <property type="match status" value="1"/>
</dbReference>
<dbReference type="PANTHER" id="PTHR19271:SF16">
    <property type="entry name" value="CYTOCHROME B"/>
    <property type="match status" value="1"/>
</dbReference>
<dbReference type="Pfam" id="PF00032">
    <property type="entry name" value="Cytochrom_B_C"/>
    <property type="match status" value="1"/>
</dbReference>
<dbReference type="Pfam" id="PF00033">
    <property type="entry name" value="Cytochrome_B"/>
    <property type="match status" value="1"/>
</dbReference>
<dbReference type="PIRSF" id="PIRSF038885">
    <property type="entry name" value="COB"/>
    <property type="match status" value="1"/>
</dbReference>
<dbReference type="SUPFAM" id="SSF81648">
    <property type="entry name" value="a domain/subunit of cytochrome bc1 complex (Ubiquinol-cytochrome c reductase)"/>
    <property type="match status" value="1"/>
</dbReference>
<dbReference type="SUPFAM" id="SSF81342">
    <property type="entry name" value="Transmembrane di-heme cytochromes"/>
    <property type="match status" value="1"/>
</dbReference>
<dbReference type="PROSITE" id="PS51003">
    <property type="entry name" value="CYTB_CTER"/>
    <property type="match status" value="1"/>
</dbReference>
<dbReference type="PROSITE" id="PS51002">
    <property type="entry name" value="CYTB_NTER"/>
    <property type="match status" value="1"/>
</dbReference>
<protein>
    <recommendedName>
        <fullName>Cytochrome b</fullName>
    </recommendedName>
    <alternativeName>
        <fullName>Complex III subunit 3</fullName>
    </alternativeName>
    <alternativeName>
        <fullName>Complex III subunit III</fullName>
    </alternativeName>
    <alternativeName>
        <fullName>Cytochrome b-c1 complex subunit 3</fullName>
    </alternativeName>
    <alternativeName>
        <fullName>Ubiquinol-cytochrome-c reductase complex cytochrome b subunit</fullName>
    </alternativeName>
</protein>
<feature type="chain" id="PRO_0000061577" description="Cytochrome b">
    <location>
        <begin position="1"/>
        <end position="379"/>
    </location>
</feature>
<feature type="transmembrane region" description="Helical" evidence="2">
    <location>
        <begin position="33"/>
        <end position="53"/>
    </location>
</feature>
<feature type="transmembrane region" description="Helical" evidence="2">
    <location>
        <begin position="77"/>
        <end position="98"/>
    </location>
</feature>
<feature type="transmembrane region" description="Helical" evidence="2">
    <location>
        <begin position="113"/>
        <end position="133"/>
    </location>
</feature>
<feature type="transmembrane region" description="Helical" evidence="2">
    <location>
        <begin position="178"/>
        <end position="198"/>
    </location>
</feature>
<feature type="transmembrane region" description="Helical" evidence="2">
    <location>
        <begin position="226"/>
        <end position="246"/>
    </location>
</feature>
<feature type="transmembrane region" description="Helical" evidence="2">
    <location>
        <begin position="288"/>
        <end position="308"/>
    </location>
</feature>
<feature type="transmembrane region" description="Helical" evidence="2">
    <location>
        <begin position="320"/>
        <end position="340"/>
    </location>
</feature>
<feature type="transmembrane region" description="Helical" evidence="2">
    <location>
        <begin position="347"/>
        <end position="367"/>
    </location>
</feature>
<feature type="binding site" description="axial binding residue" evidence="2">
    <location>
        <position position="83"/>
    </location>
    <ligand>
        <name>heme b</name>
        <dbReference type="ChEBI" id="CHEBI:60344"/>
        <label>b562</label>
    </ligand>
    <ligandPart>
        <name>Fe</name>
        <dbReference type="ChEBI" id="CHEBI:18248"/>
    </ligandPart>
</feature>
<feature type="binding site" description="axial binding residue" evidence="2">
    <location>
        <position position="97"/>
    </location>
    <ligand>
        <name>heme b</name>
        <dbReference type="ChEBI" id="CHEBI:60344"/>
        <label>b566</label>
    </ligand>
    <ligandPart>
        <name>Fe</name>
        <dbReference type="ChEBI" id="CHEBI:18248"/>
    </ligandPart>
</feature>
<feature type="binding site" description="axial binding residue" evidence="2">
    <location>
        <position position="182"/>
    </location>
    <ligand>
        <name>heme b</name>
        <dbReference type="ChEBI" id="CHEBI:60344"/>
        <label>b562</label>
    </ligand>
    <ligandPart>
        <name>Fe</name>
        <dbReference type="ChEBI" id="CHEBI:18248"/>
    </ligandPart>
</feature>
<feature type="binding site" description="axial binding residue" evidence="2">
    <location>
        <position position="196"/>
    </location>
    <ligand>
        <name>heme b</name>
        <dbReference type="ChEBI" id="CHEBI:60344"/>
        <label>b566</label>
    </ligand>
    <ligandPart>
        <name>Fe</name>
        <dbReference type="ChEBI" id="CHEBI:18248"/>
    </ligandPart>
</feature>
<feature type="binding site" evidence="2">
    <location>
        <position position="201"/>
    </location>
    <ligand>
        <name>a ubiquinone</name>
        <dbReference type="ChEBI" id="CHEBI:16389"/>
    </ligand>
</feature>